<keyword id="KW-0025">Alternative splicing</keyword>
<keyword id="KW-1015">Disulfide bond</keyword>
<keyword id="KW-0272">Extracellular matrix</keyword>
<keyword id="KW-0379">Hydroxylation</keyword>
<keyword id="KW-1185">Reference proteome</keyword>
<keyword id="KW-0677">Repeat</keyword>
<keyword id="KW-0964">Secreted</keyword>
<keyword id="KW-0732">Signal</keyword>
<accession>P07916</accession>
<protein>
    <recommendedName>
        <fullName>Elastin</fullName>
    </recommendedName>
    <alternativeName>
        <fullName>Tropoelastin</fullName>
    </alternativeName>
</protein>
<organism>
    <name type="scientific">Gallus gallus</name>
    <name type="common">Chicken</name>
    <dbReference type="NCBI Taxonomy" id="9031"/>
    <lineage>
        <taxon>Eukaryota</taxon>
        <taxon>Metazoa</taxon>
        <taxon>Chordata</taxon>
        <taxon>Craniata</taxon>
        <taxon>Vertebrata</taxon>
        <taxon>Euteleostomi</taxon>
        <taxon>Archelosauria</taxon>
        <taxon>Archosauria</taxon>
        <taxon>Dinosauria</taxon>
        <taxon>Saurischia</taxon>
        <taxon>Theropoda</taxon>
        <taxon>Coelurosauria</taxon>
        <taxon>Aves</taxon>
        <taxon>Neognathae</taxon>
        <taxon>Galloanserae</taxon>
        <taxon>Galliformes</taxon>
        <taxon>Phasianidae</taxon>
        <taxon>Phasianinae</taxon>
        <taxon>Gallus</taxon>
    </lineage>
</organism>
<name>ELN_CHICK</name>
<sequence length="750" mass="63696">ARQAAAPLLPGVLLLFSILPASQQGGVPGAIPGGGVPGGGFFPGAGVGGLGAGLGAGLGAGGKPLKPGVSGLGGLGPLGLQPGAGVGGLGAGLGAFPGAAFPGAASAAALKAAAKAGAGLGGVGGIGGLGGVGGVGVPGGLGVPGVVQPGVGAAGKPPKVPGAGIPGAFPGGGVLPGAGIRFPGVGVLPGVPTGTGIKAKGPGAGAFAGIPGGYRLPFVNGLGPGGIGAGVLAGKAGYPTGTGVGAQAAAAKAAAKYGAGVLPGAGGIPGVGGVVPGVGVVPGAGVGGPAAAAAAAKAAAKAGAYGAGVLPGAGGVPGVVPGVGVVPGLVPGVGGIPGVAGVGTPAGAAAAAAKAAKYGAGVPGVGVPGVGIGGVPGVPGVPGVPGVPGVPGVPGVPGVPGVPGVPGVPGVVPGVGVGGPAAAAAAKAAAKAAAFGAGRVPGVGVPGAVPGVGVPGVGVPGVGVPGVGVPGVGVPGVGVPGVGVPGVGVPGVGVPGVGVPGLVPGAGPAAAAKAAAKAAKYGAGGLAPGVGGLAPAVGGLAPGVGGLVPGVGGLVPGVGGLAPGVGGLAPGVGAVPGVGGPAAAAKAAAKAAKYGAGVGGVPGAVPGAVPGVPGVPGVTPGVGGVPSLVPGVGVPGVGVLPGAGIPQVGVQPGAKPPKFGVPGAGVPGVGGIPGGLGVGGLGVGGLGAGGLGAGVGVPGFGVSPIFPGGVGGQLGFGGKPPKTYGGALGALGFRGGVGCAQGKYCGRKRK</sequence>
<proteinExistence type="evidence at protein level"/>
<reference key="1">
    <citation type="journal article" date="1987" name="Biochemistry">
        <title>Repeating structure of chick tropoelastin revealed by complementary DNA cloning.</title>
        <authorList>
            <person name="Bressan G.M."/>
            <person name="Argos P."/>
            <person name="Stanley K.K."/>
        </authorList>
    </citation>
    <scope>NUCLEOTIDE SEQUENCE [MRNA]</scope>
</reference>
<reference key="2">
    <citation type="journal article" date="1988" name="Biochem. Biophys. Res. Commun.">
        <title>Multiple chick tropoelastin mRNAs.</title>
        <authorList>
            <person name="Baule V.J."/>
            <person name="Foster J.A."/>
        </authorList>
    </citation>
    <scope>NUCLEOTIDE SEQUENCE [MRNA] OF 85-750 (ISOFORM 2)</scope>
</reference>
<reference key="3">
    <citation type="journal article" date="1987" name="Arch. Biochem. Biophys.">
        <title>Sequence analysis of elastin cDNA from chick aorta and tissue-specific transcription of the elastin gene in developing chick embryo.</title>
        <authorList>
            <person name="Tokimitsu I."/>
            <person name="Tajima S."/>
            <person name="Nishikawa T."/>
            <person name="Tajima M."/>
            <person name="Fukasawa T."/>
        </authorList>
    </citation>
    <scope>NUCLEOTIDE SEQUENCE [MRNA] OF 457-750</scope>
    <source>
        <tissue>Aorta</tissue>
    </source>
</reference>
<reference key="4">
    <citation type="journal article" date="1984" name="Biochem. J.">
        <title>Isolation of tropoelastin a from lathyritic chick aortae.</title>
        <authorList>
            <person name="Rich C.B."/>
            <person name="Foster J.A."/>
        </authorList>
    </citation>
    <scope>HYDROXYLATION</scope>
</reference>
<evidence type="ECO:0000250" key="1"/>
<evidence type="ECO:0000269" key="2">
    <source>
    </source>
</evidence>
<evidence type="ECO:0000303" key="3">
    <source>
    </source>
</evidence>
<evidence type="ECO:0000305" key="4"/>
<gene>
    <name type="primary">ELN</name>
</gene>
<dbReference type="EMBL" id="M18633">
    <property type="protein sequence ID" value="AAA48761.1"/>
    <property type="molecule type" value="mRNA"/>
</dbReference>
<dbReference type="EMBL" id="M21880">
    <property type="protein sequence ID" value="AAA49082.1"/>
    <property type="molecule type" value="mRNA"/>
</dbReference>
<dbReference type="EMBL" id="M15889">
    <property type="protein sequence ID" value="AAA49108.1"/>
    <property type="molecule type" value="mRNA"/>
</dbReference>
<dbReference type="PIR" id="A26601">
    <property type="entry name" value="A26601"/>
</dbReference>
<dbReference type="STRING" id="9031.ENSGALP00000069288"/>
<dbReference type="GlyGen" id="P07916">
    <property type="glycosylation" value="1 site"/>
</dbReference>
<dbReference type="PaxDb" id="9031-ENSGALP00000001601"/>
<dbReference type="eggNOG" id="ENOG502RYNR">
    <property type="taxonomic scope" value="Eukaryota"/>
</dbReference>
<dbReference type="InParanoid" id="P07916"/>
<dbReference type="Proteomes" id="UP000000539">
    <property type="component" value="Unassembled WGS sequence"/>
</dbReference>
<dbReference type="GO" id="GO:0005576">
    <property type="term" value="C:extracellular region"/>
    <property type="evidence" value="ECO:0007669"/>
    <property type="project" value="UniProtKB-KW"/>
</dbReference>
<dbReference type="GO" id="GO:0005201">
    <property type="term" value="F:extracellular matrix structural constituent"/>
    <property type="evidence" value="ECO:0007669"/>
    <property type="project" value="InterPro"/>
</dbReference>
<dbReference type="InterPro" id="IPR003979">
    <property type="entry name" value="Tropoelastin"/>
</dbReference>
<dbReference type="PANTHER" id="PTHR24018">
    <property type="entry name" value="ELASTIN"/>
    <property type="match status" value="1"/>
</dbReference>
<dbReference type="PANTHER" id="PTHR24018:SF5">
    <property type="entry name" value="ELASTIN"/>
    <property type="match status" value="1"/>
</dbReference>
<dbReference type="PRINTS" id="PR01500">
    <property type="entry name" value="TROPOELASTIN"/>
</dbReference>
<comment type="function">
    <text>Major structural protein of tissues such as aorta and nuchal ligament, which must expand rapidly and recover completely.</text>
</comment>
<comment type="subunit">
    <text>The polymeric elastin chains are cross-linked together into an extensible 3D network.</text>
</comment>
<comment type="subcellular location">
    <subcellularLocation>
        <location>Secreted</location>
        <location>Extracellular space</location>
        <location>Extracellular matrix</location>
    </subcellularLocation>
    <text>Extracellular matrix of elastic fibers.</text>
</comment>
<comment type="alternative products">
    <event type="alternative splicing"/>
    <isoform>
        <id>P07916-1</id>
        <name>1</name>
        <sequence type="displayed"/>
    </isoform>
    <isoform>
        <id>P07916-2</id>
        <name>2</name>
        <name>Embryonic</name>
        <sequence type="described" ref="VSP_004241 VSP_004242"/>
    </isoform>
    <text>Additional isoforms seem to exist.</text>
</comment>
<comment type="PTM">
    <text>Elastin is formed through the cross-linking of its soluble precursor tropoelastin. Cross-linking is initiated through the action of lysyl oxidase on exposed lysines to form allysine. Subsequent spontaneous condensation reactions with other allysine or unmodified lysine residues result in various bi-, tri-, and tetrafunctional cross-links. The most abundant cross-links in mature elastin fibers are lysinonorleucine, allysine aldol, desmosine, and isodesmosine.</text>
</comment>
<comment type="PTM">
    <text evidence="2">Hydroxylated on proline residues.</text>
</comment>
<comment type="PTM">
    <text evidence="1">Hydroxylation on proline residues within the sequence motif, GXPG, is most likely to be 4-hydroxy as this fits the requirement for 4-hydroxylation in vertebrates.</text>
</comment>
<comment type="similarity">
    <text evidence="4">Belongs to the elastin family.</text>
</comment>
<feature type="signal peptide">
    <location>
        <begin position="1" status="less than"/>
        <end position="24"/>
    </location>
</feature>
<feature type="chain" id="PRO_0000021162" description="Elastin">
    <location>
        <begin position="25"/>
        <end position="750"/>
    </location>
</feature>
<feature type="repeat" description="1">
    <location>
        <begin position="83"/>
        <end position="127"/>
    </location>
</feature>
<feature type="repeat" description="2">
    <location>
        <begin position="219"/>
        <end position="262"/>
    </location>
</feature>
<feature type="repeat" description="3">
    <location>
        <begin position="263"/>
        <end position="318"/>
    </location>
</feature>
<feature type="repeat" description="4">
    <location>
        <begin position="319"/>
        <end position="393"/>
    </location>
</feature>
<feature type="repeat" description="5">
    <location>
        <begin position="394"/>
        <end position="482"/>
    </location>
</feature>
<feature type="repeat" description="6">
    <location>
        <begin position="483"/>
        <end position="554"/>
    </location>
</feature>
<feature type="repeat" description="7">
    <location>
        <begin position="555"/>
        <end position="619"/>
    </location>
</feature>
<feature type="repeat" description="8">
    <location>
        <begin position="620"/>
        <end position="686"/>
    </location>
</feature>
<feature type="region of interest" description="8 X tandem repeats">
    <location>
        <begin position="83"/>
        <end position="686"/>
    </location>
</feature>
<feature type="modified residue" description="4-hydroxyproline" evidence="1">
    <location>
        <position position="32"/>
    </location>
</feature>
<feature type="modified residue" description="4-hydroxyproline" evidence="1">
    <location>
        <position position="67"/>
    </location>
</feature>
<feature type="modified residue" description="4-hydroxyproline" evidence="1">
    <location>
        <position position="102"/>
    </location>
</feature>
<feature type="modified residue" description="4-hydroxyproline" evidence="1">
    <location>
        <position position="176"/>
    </location>
</feature>
<feature type="modified residue" description="4-hydroxyproline" evidence="1">
    <location>
        <position position="189"/>
    </location>
</feature>
<feature type="modified residue" description="4-hydroxyproline" evidence="1">
    <location>
        <position position="192"/>
    </location>
</feature>
<feature type="modified residue" description="4-hydroxyproline" evidence="1">
    <location>
        <position position="211"/>
    </location>
</feature>
<feature type="modified residue" description="4-hydroxyproline" evidence="1">
    <location>
        <position position="276"/>
    </location>
</feature>
<feature type="modified residue" description="4-hydroxyproline" evidence="1">
    <location>
        <position position="345"/>
    </location>
</feature>
<feature type="modified residue" description="4-hydroxyproline" evidence="1">
    <location>
        <position position="363"/>
    </location>
</feature>
<feature type="modified residue" description="4-hydroxyproline" evidence="1">
    <location>
        <position position="368"/>
    </location>
</feature>
<feature type="modified residue" description="4-hydroxyproline" evidence="1">
    <location>
        <position position="441"/>
    </location>
</feature>
<feature type="modified residue" description="4-hydroxyproline" evidence="1">
    <location>
        <position position="455"/>
    </location>
</feature>
<feature type="modified residue" description="4-hydroxyproline" evidence="1">
    <location>
        <position position="480"/>
    </location>
</feature>
<feature type="modified residue" description="4-hydroxyproline" evidence="1">
    <location>
        <position position="576"/>
    </location>
</feature>
<feature type="modified residue" description="4-hydroxyproline" evidence="1">
    <location>
        <position position="635"/>
    </location>
</feature>
<feature type="modified residue" description="4-hydroxyproline" evidence="1">
    <location>
        <position position="720"/>
    </location>
</feature>
<feature type="disulfide bond" evidence="1">
    <location>
        <begin position="739"/>
        <end position="745"/>
    </location>
</feature>
<feature type="splice variant" id="VSP_004241" description="In isoform 2." evidence="3">
    <original>G</original>
    <variation>GLGGFGGQQPGVPLGYPIKAPKLPG</variation>
    <location>
        <position position="212"/>
    </location>
</feature>
<feature type="splice variant" id="VSP_004242" description="In isoform 2." evidence="3">
    <original>G</original>
    <variation>GVGVPGVGVPG</variation>
    <location>
        <position position="501"/>
    </location>
</feature>
<feature type="sequence conflict" description="In Ref. 3." evidence="4" ref="3">
    <original>A</original>
    <variation>G</variation>
    <location>
        <position position="536"/>
    </location>
</feature>
<feature type="sequence conflict" description="In Ref. 3." evidence="4" ref="3">
    <original>G</original>
    <variation>A</variation>
    <location>
        <position position="571"/>
    </location>
</feature>
<feature type="sequence conflict" description="In Ref. 3." evidence="4" ref="3">
    <original>P</original>
    <variation>A</variation>
    <location>
        <position position="610"/>
    </location>
</feature>
<feature type="sequence conflict" description="In Ref. 3." evidence="4" ref="3">
    <original>A</original>
    <variation>R</variation>
    <location>
        <position position="654"/>
    </location>
</feature>
<feature type="sequence conflict" description="In Ref. 3." evidence="4" ref="3">
    <original>P</original>
    <variation>R</variation>
    <location>
        <position position="667"/>
    </location>
</feature>
<feature type="non-terminal residue">
    <location>
        <position position="1"/>
    </location>
</feature>